<feature type="chain" id="PRO_1000093746" description="Methionine--tRNA ligase">
    <location>
        <begin position="1"/>
        <end position="675"/>
    </location>
</feature>
<feature type="domain" description="tRNA-binding" evidence="1">
    <location>
        <begin position="573"/>
        <end position="675"/>
    </location>
</feature>
<feature type="short sequence motif" description="'HIGH' region">
    <location>
        <begin position="15"/>
        <end position="25"/>
    </location>
</feature>
<feature type="short sequence motif" description="'KMSKS' region">
    <location>
        <begin position="332"/>
        <end position="336"/>
    </location>
</feature>
<feature type="binding site" evidence="1">
    <location>
        <position position="146"/>
    </location>
    <ligand>
        <name>Zn(2+)</name>
        <dbReference type="ChEBI" id="CHEBI:29105"/>
    </ligand>
</feature>
<feature type="binding site" evidence="1">
    <location>
        <position position="149"/>
    </location>
    <ligand>
        <name>Zn(2+)</name>
        <dbReference type="ChEBI" id="CHEBI:29105"/>
    </ligand>
</feature>
<feature type="binding site" evidence="1">
    <location>
        <position position="159"/>
    </location>
    <ligand>
        <name>Zn(2+)</name>
        <dbReference type="ChEBI" id="CHEBI:29105"/>
    </ligand>
</feature>
<feature type="binding site" evidence="1">
    <location>
        <position position="162"/>
    </location>
    <ligand>
        <name>Zn(2+)</name>
        <dbReference type="ChEBI" id="CHEBI:29105"/>
    </ligand>
</feature>
<feature type="binding site" evidence="1">
    <location>
        <position position="335"/>
    </location>
    <ligand>
        <name>ATP</name>
        <dbReference type="ChEBI" id="CHEBI:30616"/>
    </ligand>
</feature>
<reference key="1">
    <citation type="journal article" date="2010" name="J. Bacteriol.">
        <title>Genome sequence of the deep-rooted Yersinia pestis strain Angola reveals new insights into the evolution and pangenome of the plague bacterium.</title>
        <authorList>
            <person name="Eppinger M."/>
            <person name="Worsham P.L."/>
            <person name="Nikolich M.P."/>
            <person name="Riley D.R."/>
            <person name="Sebastian Y."/>
            <person name="Mou S."/>
            <person name="Achtman M."/>
            <person name="Lindler L.E."/>
            <person name="Ravel J."/>
        </authorList>
    </citation>
    <scope>NUCLEOTIDE SEQUENCE [LARGE SCALE GENOMIC DNA]</scope>
    <source>
        <strain>Angola</strain>
    </source>
</reference>
<comment type="function">
    <text evidence="1">Is required not only for elongation of protein synthesis but also for the initiation of all mRNA translation through initiator tRNA(fMet) aminoacylation.</text>
</comment>
<comment type="catalytic activity">
    <reaction evidence="1">
        <text>tRNA(Met) + L-methionine + ATP = L-methionyl-tRNA(Met) + AMP + diphosphate</text>
        <dbReference type="Rhea" id="RHEA:13481"/>
        <dbReference type="Rhea" id="RHEA-COMP:9667"/>
        <dbReference type="Rhea" id="RHEA-COMP:9698"/>
        <dbReference type="ChEBI" id="CHEBI:30616"/>
        <dbReference type="ChEBI" id="CHEBI:33019"/>
        <dbReference type="ChEBI" id="CHEBI:57844"/>
        <dbReference type="ChEBI" id="CHEBI:78442"/>
        <dbReference type="ChEBI" id="CHEBI:78530"/>
        <dbReference type="ChEBI" id="CHEBI:456215"/>
        <dbReference type="EC" id="6.1.1.10"/>
    </reaction>
</comment>
<comment type="cofactor">
    <cofactor evidence="1">
        <name>Zn(2+)</name>
        <dbReference type="ChEBI" id="CHEBI:29105"/>
    </cofactor>
    <text evidence="1">Binds 1 zinc ion per subunit.</text>
</comment>
<comment type="subunit">
    <text evidence="1">Homodimer.</text>
</comment>
<comment type="subcellular location">
    <subcellularLocation>
        <location evidence="1">Cytoplasm</location>
    </subcellularLocation>
</comment>
<comment type="similarity">
    <text evidence="1">Belongs to the class-I aminoacyl-tRNA synthetase family. MetG type 1 subfamily.</text>
</comment>
<gene>
    <name evidence="1" type="primary">metG</name>
    <name type="ordered locus">YpAngola_A3197</name>
</gene>
<sequence length="675" mass="75636">MAQVAKKILVTCALPYANGSIHLGHMLEHIQADIWVRFQRMRGNQVHFICADDAHGTPIMLKAQQMGIEPEQMIAEMSQEHQQDFAGFAISYDNYHSTHSDENRELSSLIYGRLKANGYIKNRTISQLYDPEKGMFLPDRFVKGTCPKCKAPEQYGDNCEVCGATYSPTELIDPKSAVSGATPVMRESEHFFFDLPAFSDMLQAWTRSGALQEQVANKMQEWFDSGLQQWDITRDAPYFGFEVPDAPGKYFYVWLDAPIGYMGAFKNLCDKRGDLDFDEFWGKDAKTDLYHFIGKDIVYFHSLFWPAMLEGSNFRKPTNLFVHGYVTVNGAKMSKSRGTFIKAGTYLKYLDADCLRYYYAAKLSSRIDDIDLNLEDFVQRVNADIVNKVVNLASRNAGFINKRFAGQLADQLADPVLYKTFTDAATSIADAYNNRESGKAIREIMALADVANRYVDEQAPWVVAKQEGRDADLHAICSMGINLFRVLMTYLKPVLPSLTERTEAFLNTELTWDSIEQPLLGHSITAFKALFNRIDLDKVNEMVASSKEDMAPATRVTGPLADDPIQETISFDDFAKVDMRIALIQQAEFVEGSDKLLKLTLELGGETRQVFSGLRSAYPDPKALEGRMTVMVANLAPRKMRFGVSEGMVMAAGPGGSDIFLLSPDSGAQPGMQVK</sequence>
<organism>
    <name type="scientific">Yersinia pestis bv. Antiqua (strain Angola)</name>
    <dbReference type="NCBI Taxonomy" id="349746"/>
    <lineage>
        <taxon>Bacteria</taxon>
        <taxon>Pseudomonadati</taxon>
        <taxon>Pseudomonadota</taxon>
        <taxon>Gammaproteobacteria</taxon>
        <taxon>Enterobacterales</taxon>
        <taxon>Yersiniaceae</taxon>
        <taxon>Yersinia</taxon>
    </lineage>
</organism>
<accession>A9R2M7</accession>
<protein>
    <recommendedName>
        <fullName evidence="1">Methionine--tRNA ligase</fullName>
        <ecNumber evidence="1">6.1.1.10</ecNumber>
    </recommendedName>
    <alternativeName>
        <fullName evidence="1">Methionyl-tRNA synthetase</fullName>
        <shortName evidence="1">MetRS</shortName>
    </alternativeName>
</protein>
<name>SYM_YERPG</name>
<evidence type="ECO:0000255" key="1">
    <source>
        <dbReference type="HAMAP-Rule" id="MF_00098"/>
    </source>
</evidence>
<dbReference type="EC" id="6.1.1.10" evidence="1"/>
<dbReference type="EMBL" id="CP000901">
    <property type="protein sequence ID" value="ABX85947.1"/>
    <property type="molecule type" value="Genomic_DNA"/>
</dbReference>
<dbReference type="RefSeq" id="WP_012229898.1">
    <property type="nucleotide sequence ID" value="NC_010159.1"/>
</dbReference>
<dbReference type="SMR" id="A9R2M7"/>
<dbReference type="KEGG" id="ypg:YpAngola_A3197"/>
<dbReference type="PATRIC" id="fig|349746.12.peg.4258"/>
<dbReference type="GO" id="GO:0005829">
    <property type="term" value="C:cytosol"/>
    <property type="evidence" value="ECO:0007669"/>
    <property type="project" value="TreeGrafter"/>
</dbReference>
<dbReference type="GO" id="GO:0005524">
    <property type="term" value="F:ATP binding"/>
    <property type="evidence" value="ECO:0007669"/>
    <property type="project" value="UniProtKB-UniRule"/>
</dbReference>
<dbReference type="GO" id="GO:0046872">
    <property type="term" value="F:metal ion binding"/>
    <property type="evidence" value="ECO:0007669"/>
    <property type="project" value="UniProtKB-KW"/>
</dbReference>
<dbReference type="GO" id="GO:0004825">
    <property type="term" value="F:methionine-tRNA ligase activity"/>
    <property type="evidence" value="ECO:0007669"/>
    <property type="project" value="UniProtKB-UniRule"/>
</dbReference>
<dbReference type="GO" id="GO:0000049">
    <property type="term" value="F:tRNA binding"/>
    <property type="evidence" value="ECO:0007669"/>
    <property type="project" value="UniProtKB-KW"/>
</dbReference>
<dbReference type="GO" id="GO:0006431">
    <property type="term" value="P:methionyl-tRNA aminoacylation"/>
    <property type="evidence" value="ECO:0007669"/>
    <property type="project" value="UniProtKB-UniRule"/>
</dbReference>
<dbReference type="CDD" id="cd07957">
    <property type="entry name" value="Anticodon_Ia_Met"/>
    <property type="match status" value="1"/>
</dbReference>
<dbReference type="CDD" id="cd00814">
    <property type="entry name" value="MetRS_core"/>
    <property type="match status" value="1"/>
</dbReference>
<dbReference type="CDD" id="cd02800">
    <property type="entry name" value="tRNA_bind_EcMetRS_like"/>
    <property type="match status" value="1"/>
</dbReference>
<dbReference type="FunFam" id="1.10.730.10:FF:000005">
    <property type="entry name" value="Methionine--tRNA ligase"/>
    <property type="match status" value="1"/>
</dbReference>
<dbReference type="FunFam" id="2.20.28.20:FF:000001">
    <property type="entry name" value="Methionine--tRNA ligase"/>
    <property type="match status" value="1"/>
</dbReference>
<dbReference type="FunFam" id="2.40.50.140:FF:000042">
    <property type="entry name" value="Methionine--tRNA ligase"/>
    <property type="match status" value="1"/>
</dbReference>
<dbReference type="Gene3D" id="3.40.50.620">
    <property type="entry name" value="HUPs"/>
    <property type="match status" value="1"/>
</dbReference>
<dbReference type="Gene3D" id="1.10.730.10">
    <property type="entry name" value="Isoleucyl-tRNA Synthetase, Domain 1"/>
    <property type="match status" value="1"/>
</dbReference>
<dbReference type="Gene3D" id="2.20.28.20">
    <property type="entry name" value="Methionyl-tRNA synthetase, Zn-domain"/>
    <property type="match status" value="1"/>
</dbReference>
<dbReference type="Gene3D" id="2.40.50.140">
    <property type="entry name" value="Nucleic acid-binding proteins"/>
    <property type="match status" value="1"/>
</dbReference>
<dbReference type="HAMAP" id="MF_00098">
    <property type="entry name" value="Met_tRNA_synth_type1"/>
    <property type="match status" value="1"/>
</dbReference>
<dbReference type="InterPro" id="IPR001412">
    <property type="entry name" value="aa-tRNA-synth_I_CS"/>
</dbReference>
<dbReference type="InterPro" id="IPR041872">
    <property type="entry name" value="Anticodon_Met"/>
</dbReference>
<dbReference type="InterPro" id="IPR004495">
    <property type="entry name" value="Met-tRNA-synth_bsu_C"/>
</dbReference>
<dbReference type="InterPro" id="IPR023458">
    <property type="entry name" value="Met-tRNA_ligase_1"/>
</dbReference>
<dbReference type="InterPro" id="IPR014758">
    <property type="entry name" value="Met-tRNA_synth"/>
</dbReference>
<dbReference type="InterPro" id="IPR015413">
    <property type="entry name" value="Methionyl/Leucyl_tRNA_Synth"/>
</dbReference>
<dbReference type="InterPro" id="IPR033911">
    <property type="entry name" value="MetRS_core"/>
</dbReference>
<dbReference type="InterPro" id="IPR029038">
    <property type="entry name" value="MetRS_Zn"/>
</dbReference>
<dbReference type="InterPro" id="IPR012340">
    <property type="entry name" value="NA-bd_OB-fold"/>
</dbReference>
<dbReference type="InterPro" id="IPR014729">
    <property type="entry name" value="Rossmann-like_a/b/a_fold"/>
</dbReference>
<dbReference type="InterPro" id="IPR002547">
    <property type="entry name" value="tRNA-bd_dom"/>
</dbReference>
<dbReference type="InterPro" id="IPR009080">
    <property type="entry name" value="tRNAsynth_Ia_anticodon-bd"/>
</dbReference>
<dbReference type="NCBIfam" id="TIGR00398">
    <property type="entry name" value="metG"/>
    <property type="match status" value="1"/>
</dbReference>
<dbReference type="NCBIfam" id="TIGR00399">
    <property type="entry name" value="metG_C_term"/>
    <property type="match status" value="1"/>
</dbReference>
<dbReference type="NCBIfam" id="NF001100">
    <property type="entry name" value="PRK00133.1"/>
    <property type="match status" value="1"/>
</dbReference>
<dbReference type="PANTHER" id="PTHR45765">
    <property type="entry name" value="METHIONINE--TRNA LIGASE"/>
    <property type="match status" value="1"/>
</dbReference>
<dbReference type="PANTHER" id="PTHR45765:SF1">
    <property type="entry name" value="METHIONINE--TRNA LIGASE, CYTOPLASMIC"/>
    <property type="match status" value="1"/>
</dbReference>
<dbReference type="Pfam" id="PF19303">
    <property type="entry name" value="Anticodon_3"/>
    <property type="match status" value="1"/>
</dbReference>
<dbReference type="Pfam" id="PF09334">
    <property type="entry name" value="tRNA-synt_1g"/>
    <property type="match status" value="1"/>
</dbReference>
<dbReference type="Pfam" id="PF01588">
    <property type="entry name" value="tRNA_bind"/>
    <property type="match status" value="1"/>
</dbReference>
<dbReference type="PRINTS" id="PR01041">
    <property type="entry name" value="TRNASYNTHMET"/>
</dbReference>
<dbReference type="SUPFAM" id="SSF47323">
    <property type="entry name" value="Anticodon-binding domain of a subclass of class I aminoacyl-tRNA synthetases"/>
    <property type="match status" value="1"/>
</dbReference>
<dbReference type="SUPFAM" id="SSF57770">
    <property type="entry name" value="Methionyl-tRNA synthetase (MetRS), Zn-domain"/>
    <property type="match status" value="1"/>
</dbReference>
<dbReference type="SUPFAM" id="SSF50249">
    <property type="entry name" value="Nucleic acid-binding proteins"/>
    <property type="match status" value="1"/>
</dbReference>
<dbReference type="SUPFAM" id="SSF52374">
    <property type="entry name" value="Nucleotidylyl transferase"/>
    <property type="match status" value="1"/>
</dbReference>
<dbReference type="PROSITE" id="PS00178">
    <property type="entry name" value="AA_TRNA_LIGASE_I"/>
    <property type="match status" value="1"/>
</dbReference>
<dbReference type="PROSITE" id="PS50886">
    <property type="entry name" value="TRBD"/>
    <property type="match status" value="1"/>
</dbReference>
<proteinExistence type="inferred from homology"/>
<keyword id="KW-0030">Aminoacyl-tRNA synthetase</keyword>
<keyword id="KW-0067">ATP-binding</keyword>
<keyword id="KW-0963">Cytoplasm</keyword>
<keyword id="KW-0436">Ligase</keyword>
<keyword id="KW-0479">Metal-binding</keyword>
<keyword id="KW-0547">Nucleotide-binding</keyword>
<keyword id="KW-0648">Protein biosynthesis</keyword>
<keyword id="KW-0694">RNA-binding</keyword>
<keyword id="KW-0820">tRNA-binding</keyword>
<keyword id="KW-0862">Zinc</keyword>